<gene>
    <name type="primary">IQCF2</name>
</gene>
<name>IQCF2_BOVIN</name>
<dbReference type="EMBL" id="BC111609">
    <property type="protein sequence ID" value="AAI11610.1"/>
    <property type="molecule type" value="mRNA"/>
</dbReference>
<dbReference type="RefSeq" id="NP_001071412.1">
    <property type="nucleotide sequence ID" value="NM_001077944.2"/>
</dbReference>
<dbReference type="SMR" id="Q2M2U5"/>
<dbReference type="STRING" id="9913.ENSBTAP00000043137"/>
<dbReference type="PaxDb" id="9913-ENSBTAP00000043137"/>
<dbReference type="GeneID" id="521051"/>
<dbReference type="KEGG" id="bta:521051"/>
<dbReference type="CTD" id="389123"/>
<dbReference type="eggNOG" id="ENOG502SR3N">
    <property type="taxonomic scope" value="Eukaryota"/>
</dbReference>
<dbReference type="HOGENOM" id="CLU_114989_2_0_1"/>
<dbReference type="InParanoid" id="Q2M2U5"/>
<dbReference type="OrthoDB" id="9821394at2759"/>
<dbReference type="TreeFam" id="TF337908"/>
<dbReference type="Proteomes" id="UP000009136">
    <property type="component" value="Unplaced"/>
</dbReference>
<dbReference type="GO" id="GO:0005516">
    <property type="term" value="F:calmodulin binding"/>
    <property type="evidence" value="ECO:0000318"/>
    <property type="project" value="GO_Central"/>
</dbReference>
<dbReference type="FunFam" id="1.20.5.190:FF:000014">
    <property type="entry name" value="IQ motif containing F5"/>
    <property type="match status" value="1"/>
</dbReference>
<dbReference type="FunFam" id="1.20.5.190:FF:000015">
    <property type="entry name" value="IQ motif containing F5"/>
    <property type="match status" value="1"/>
</dbReference>
<dbReference type="Gene3D" id="1.20.5.190">
    <property type="match status" value="2"/>
</dbReference>
<dbReference type="InterPro" id="IPR000048">
    <property type="entry name" value="IQ_motif_EF-hand-BS"/>
</dbReference>
<dbReference type="InterPro" id="IPR039887">
    <property type="entry name" value="IQCF"/>
</dbReference>
<dbReference type="PANTHER" id="PTHR21633:SF4">
    <property type="entry name" value="IQ DOMAIN-CONTAINING PROTEIN F2"/>
    <property type="match status" value="1"/>
</dbReference>
<dbReference type="PANTHER" id="PTHR21633">
    <property type="entry name" value="IQ MOTIF CONTAINING F"/>
    <property type="match status" value="1"/>
</dbReference>
<dbReference type="Pfam" id="PF00612">
    <property type="entry name" value="IQ"/>
    <property type="match status" value="2"/>
</dbReference>
<dbReference type="SMART" id="SM00015">
    <property type="entry name" value="IQ"/>
    <property type="match status" value="3"/>
</dbReference>
<dbReference type="PROSITE" id="PS50096">
    <property type="entry name" value="IQ"/>
    <property type="match status" value="1"/>
</dbReference>
<feature type="chain" id="PRO_0000282558" description="IQ domain-containing protein F2">
    <location>
        <begin position="1"/>
        <end position="163"/>
    </location>
</feature>
<feature type="domain" description="IQ 1" evidence="1">
    <location>
        <begin position="42"/>
        <end position="71"/>
    </location>
</feature>
<feature type="domain" description="IQ 2" evidence="1">
    <location>
        <begin position="98"/>
        <end position="127"/>
    </location>
</feature>
<accession>Q2M2U5</accession>
<organism>
    <name type="scientific">Bos taurus</name>
    <name type="common">Bovine</name>
    <dbReference type="NCBI Taxonomy" id="9913"/>
    <lineage>
        <taxon>Eukaryota</taxon>
        <taxon>Metazoa</taxon>
        <taxon>Chordata</taxon>
        <taxon>Craniata</taxon>
        <taxon>Vertebrata</taxon>
        <taxon>Euteleostomi</taxon>
        <taxon>Mammalia</taxon>
        <taxon>Eutheria</taxon>
        <taxon>Laurasiatheria</taxon>
        <taxon>Artiodactyla</taxon>
        <taxon>Ruminantia</taxon>
        <taxon>Pecora</taxon>
        <taxon>Bovidae</taxon>
        <taxon>Bovinae</taxon>
        <taxon>Bos</taxon>
    </lineage>
</organism>
<protein>
    <recommendedName>
        <fullName>IQ domain-containing protein F2</fullName>
    </recommendedName>
</protein>
<proteinExistence type="evidence at transcript level"/>
<reference key="1">
    <citation type="submission" date="2006-01" db="EMBL/GenBank/DDBJ databases">
        <authorList>
            <consortium name="NIH - Mammalian Gene Collection (MGC) project"/>
        </authorList>
    </citation>
    <scope>NUCLEOTIDE SEQUENCE [LARGE SCALE MRNA]</scope>
    <source>
        <strain>Hereford</strain>
        <tissue>Testis</tissue>
    </source>
</reference>
<sequence length="163" mass="19535">MGVRFCKDGHVIQIIIENKEEVTMKKMKEQQKKREKTKNGRRVIAAKKIQAWWRGTLVRRTLLHAALSTWIIQSWWRLTKDRLLQKKRRAALSDYALRERAVVKLQSLVRMWRIHWRYCQVLNAIYVIQCHWQCHNCQTCALLRGHCVVTATHLQFHIEIINP</sequence>
<keyword id="KW-1185">Reference proteome</keyword>
<keyword id="KW-0677">Repeat</keyword>
<evidence type="ECO:0000255" key="1">
    <source>
        <dbReference type="PROSITE-ProRule" id="PRU00116"/>
    </source>
</evidence>